<feature type="signal peptide" evidence="3">
    <location>
        <begin position="1"/>
        <end position="34"/>
    </location>
</feature>
<feature type="chain" id="PRO_0000005115" description="C-X-C motif chemokine 14">
    <location>
        <begin position="35"/>
        <end position="111"/>
    </location>
</feature>
<feature type="short sequence motif" description="D-box">
    <location>
        <begin position="67"/>
        <end position="81"/>
    </location>
</feature>
<feature type="disulfide bond" evidence="4">
    <location>
        <begin position="37"/>
        <end position="63"/>
    </location>
</feature>
<feature type="disulfide bond" evidence="4">
    <location>
        <begin position="39"/>
        <end position="84"/>
    </location>
</feature>
<feature type="sequence conflict" description="In Ref. 2; AAF78449." evidence="5" ref="2">
    <original>V</original>
    <variation>F</variation>
    <location>
        <position position="108"/>
    </location>
</feature>
<feature type="strand" evidence="6">
    <location>
        <begin position="41"/>
        <end position="44"/>
    </location>
</feature>
<feature type="helix" evidence="6">
    <location>
        <begin position="48"/>
        <end position="50"/>
    </location>
</feature>
<feature type="strand" evidence="6">
    <location>
        <begin position="51"/>
        <end position="56"/>
    </location>
</feature>
<feature type="strand" evidence="6">
    <location>
        <begin position="63"/>
        <end position="65"/>
    </location>
</feature>
<feature type="strand" evidence="6">
    <location>
        <begin position="68"/>
        <end position="72"/>
    </location>
</feature>
<feature type="strand" evidence="6">
    <location>
        <begin position="74"/>
        <end position="76"/>
    </location>
</feature>
<feature type="turn" evidence="6">
    <location>
        <begin position="77"/>
        <end position="80"/>
    </location>
</feature>
<feature type="strand" evidence="6">
    <location>
        <begin position="81"/>
        <end position="85"/>
    </location>
</feature>
<feature type="helix" evidence="6">
    <location>
        <begin position="90"/>
        <end position="106"/>
    </location>
</feature>
<gene>
    <name type="primary">CXCL14</name>
    <name type="synonym">MIP2G</name>
    <name type="synonym">NJAC</name>
    <name type="synonym">SCYB14</name>
    <name type="ORF">PSEC0212</name>
    <name type="ORF">UNQ240/PRO273</name>
</gene>
<name>CXL14_HUMAN</name>
<accession>O95715</accession>
<accession>B3KQU8</accession>
<accession>Q6UW97</accession>
<accession>Q86U69</accession>
<accession>Q9BTR1</accession>
<accession>Q9NS21</accession>
<protein>
    <recommendedName>
        <fullName>C-X-C motif chemokine 14</fullName>
    </recommendedName>
    <alternativeName>
        <fullName>Chemokine BRAK</fullName>
    </alternativeName>
    <alternativeName>
        <fullName>MIP-2G</fullName>
    </alternativeName>
    <alternativeName>
        <fullName>Small-inducible cytokine B14</fullName>
    </alternativeName>
</protein>
<sequence>MSLLPRRAPPVSMRLLAAALLLLLLALYTARVDGSKCKCSRKGPKIRYSDVKKLEMKPKYPHCEEKMVIITTKSVSRYRGQEHCLHPKLQSTKRFIKWYNAWNEKRRVYEE</sequence>
<organism>
    <name type="scientific">Homo sapiens</name>
    <name type="common">Human</name>
    <dbReference type="NCBI Taxonomy" id="9606"/>
    <lineage>
        <taxon>Eukaryota</taxon>
        <taxon>Metazoa</taxon>
        <taxon>Chordata</taxon>
        <taxon>Craniata</taxon>
        <taxon>Vertebrata</taxon>
        <taxon>Euteleostomi</taxon>
        <taxon>Mammalia</taxon>
        <taxon>Eutheria</taxon>
        <taxon>Euarchontoglires</taxon>
        <taxon>Primates</taxon>
        <taxon>Haplorrhini</taxon>
        <taxon>Catarrhini</taxon>
        <taxon>Hominidae</taxon>
        <taxon>Homo</taxon>
    </lineage>
</organism>
<dbReference type="EMBL" id="AF144103">
    <property type="protein sequence ID" value="AAD38944.1"/>
    <property type="status" value="ALT_INIT"/>
    <property type="molecule type" value="mRNA"/>
</dbReference>
<dbReference type="EMBL" id="AF106911">
    <property type="protein sequence ID" value="AAF78449.1"/>
    <property type="molecule type" value="mRNA"/>
</dbReference>
<dbReference type="EMBL" id="AY358906">
    <property type="protein sequence ID" value="AAQ89265.1"/>
    <property type="molecule type" value="mRNA"/>
</dbReference>
<dbReference type="EMBL" id="AK075514">
    <property type="protein sequence ID" value="BAG52160.1"/>
    <property type="molecule type" value="mRNA"/>
</dbReference>
<dbReference type="EMBL" id="BT007080">
    <property type="protein sequence ID" value="AAP35743.1"/>
    <property type="molecule type" value="mRNA"/>
</dbReference>
<dbReference type="EMBL" id="AC034206">
    <property type="status" value="NOT_ANNOTATED_CDS"/>
    <property type="molecule type" value="Genomic_DNA"/>
</dbReference>
<dbReference type="EMBL" id="BC003513">
    <property type="protein sequence ID" value="AAH03513.1"/>
    <property type="molecule type" value="mRNA"/>
</dbReference>
<dbReference type="EMBL" id="AF073957">
    <property type="protein sequence ID" value="AAD03839.1"/>
    <property type="molecule type" value="mRNA"/>
</dbReference>
<dbReference type="PIR" id="JG0182">
    <property type="entry name" value="JG0182"/>
</dbReference>
<dbReference type="RefSeq" id="NP_004878.2">
    <property type="nucleotide sequence ID" value="NM_004887.4"/>
</dbReference>
<dbReference type="PDB" id="2HDL">
    <property type="method" value="NMR"/>
    <property type="chains" value="A=35-111"/>
</dbReference>
<dbReference type="PDBsum" id="2HDL"/>
<dbReference type="SMR" id="O95715"/>
<dbReference type="BioGRID" id="114921">
    <property type="interactions" value="43"/>
</dbReference>
<dbReference type="DIP" id="DIP-61148N"/>
<dbReference type="FunCoup" id="O95715">
    <property type="interactions" value="839"/>
</dbReference>
<dbReference type="IntAct" id="O95715">
    <property type="interactions" value="38"/>
</dbReference>
<dbReference type="MINT" id="O95715"/>
<dbReference type="STRING" id="9606.ENSP00000337065"/>
<dbReference type="iPTMnet" id="O95715"/>
<dbReference type="PhosphoSitePlus" id="O95715"/>
<dbReference type="BioMuta" id="CXCL14"/>
<dbReference type="MassIVE" id="O95715"/>
<dbReference type="PaxDb" id="9606-ENSP00000337065"/>
<dbReference type="PeptideAtlas" id="O95715"/>
<dbReference type="ProteomicsDB" id="51009"/>
<dbReference type="Antibodypedia" id="14757">
    <property type="antibodies" value="325 antibodies from 33 providers"/>
</dbReference>
<dbReference type="DNASU" id="9547"/>
<dbReference type="Ensembl" id="ENST00000337225.5">
    <property type="protein sequence ID" value="ENSP00000337065.5"/>
    <property type="gene ID" value="ENSG00000145824.13"/>
</dbReference>
<dbReference type="GeneID" id="9547"/>
<dbReference type="KEGG" id="hsa:9547"/>
<dbReference type="UCSC" id="uc003lay.4">
    <property type="organism name" value="human"/>
</dbReference>
<dbReference type="AGR" id="HGNC:10640"/>
<dbReference type="CTD" id="9547"/>
<dbReference type="DisGeNET" id="9547"/>
<dbReference type="GeneCards" id="CXCL14"/>
<dbReference type="HGNC" id="HGNC:10640">
    <property type="gene designation" value="CXCL14"/>
</dbReference>
<dbReference type="HPA" id="ENSG00000145824">
    <property type="expression patterns" value="Tissue enhanced (skin)"/>
</dbReference>
<dbReference type="MIM" id="604186">
    <property type="type" value="gene"/>
</dbReference>
<dbReference type="neXtProt" id="NX_O95715"/>
<dbReference type="OpenTargets" id="ENSG00000145824"/>
<dbReference type="PharmGKB" id="PA35571"/>
<dbReference type="VEuPathDB" id="HostDB:ENSG00000145824"/>
<dbReference type="eggNOG" id="ENOG502S4VP">
    <property type="taxonomic scope" value="Eukaryota"/>
</dbReference>
<dbReference type="GeneTree" id="ENSGT00390000000618"/>
<dbReference type="InParanoid" id="O95715"/>
<dbReference type="OMA" id="GQQYCLH"/>
<dbReference type="OrthoDB" id="8667291at2759"/>
<dbReference type="PAN-GO" id="O95715">
    <property type="GO annotations" value="1 GO annotation based on evolutionary models"/>
</dbReference>
<dbReference type="PhylomeDB" id="O95715"/>
<dbReference type="TreeFam" id="TF332769"/>
<dbReference type="PathwayCommons" id="O95715"/>
<dbReference type="SignaLink" id="O95715"/>
<dbReference type="BioGRID-ORCS" id="9547">
    <property type="hits" value="119 hits in 1084 CRISPR screens"/>
</dbReference>
<dbReference type="ChiTaRS" id="CXCL14">
    <property type="organism name" value="human"/>
</dbReference>
<dbReference type="EvolutionaryTrace" id="O95715"/>
<dbReference type="GenomeRNAi" id="9547"/>
<dbReference type="Pharos" id="O95715">
    <property type="development level" value="Tbio"/>
</dbReference>
<dbReference type="PRO" id="PR:O95715"/>
<dbReference type="Proteomes" id="UP000005640">
    <property type="component" value="Chromosome 5"/>
</dbReference>
<dbReference type="RNAct" id="O95715">
    <property type="molecule type" value="protein"/>
</dbReference>
<dbReference type="Bgee" id="ENSG00000145824">
    <property type="expression patterns" value="Expressed in skin of hip and 192 other cell types or tissues"/>
</dbReference>
<dbReference type="ExpressionAtlas" id="O95715">
    <property type="expression patterns" value="baseline and differential"/>
</dbReference>
<dbReference type="GO" id="GO:0005615">
    <property type="term" value="C:extracellular space"/>
    <property type="evidence" value="ECO:0007669"/>
    <property type="project" value="UniProtKB-KW"/>
</dbReference>
<dbReference type="GO" id="GO:0005794">
    <property type="term" value="C:Golgi apparatus"/>
    <property type="evidence" value="ECO:0000314"/>
    <property type="project" value="LIFEdb"/>
</dbReference>
<dbReference type="GO" id="GO:0008009">
    <property type="term" value="F:chemokine activity"/>
    <property type="evidence" value="ECO:0000304"/>
    <property type="project" value="ProtInc"/>
</dbReference>
<dbReference type="GO" id="GO:0061844">
    <property type="term" value="P:antimicrobial humoral immune response mediated by antimicrobial peptide"/>
    <property type="evidence" value="ECO:0000318"/>
    <property type="project" value="GO_Central"/>
</dbReference>
<dbReference type="GO" id="GO:0007267">
    <property type="term" value="P:cell-cell signaling"/>
    <property type="evidence" value="ECO:0000304"/>
    <property type="project" value="ProtInc"/>
</dbReference>
<dbReference type="GO" id="GO:0006935">
    <property type="term" value="P:chemotaxis"/>
    <property type="evidence" value="ECO:0000304"/>
    <property type="project" value="ProtInc"/>
</dbReference>
<dbReference type="GO" id="GO:0007165">
    <property type="term" value="P:signal transduction"/>
    <property type="evidence" value="ECO:0000304"/>
    <property type="project" value="ProtInc"/>
</dbReference>
<dbReference type="FunFam" id="2.40.50.40:FF:000020">
    <property type="entry name" value="C-X-C motif chemokine 14"/>
    <property type="match status" value="1"/>
</dbReference>
<dbReference type="Gene3D" id="2.40.50.40">
    <property type="match status" value="1"/>
</dbReference>
<dbReference type="InterPro" id="IPR001811">
    <property type="entry name" value="Chemokine_IL8-like_dom"/>
</dbReference>
<dbReference type="InterPro" id="IPR036048">
    <property type="entry name" value="Interleukin_8-like_sf"/>
</dbReference>
<dbReference type="Pfam" id="PF00048">
    <property type="entry name" value="IL8"/>
    <property type="match status" value="1"/>
</dbReference>
<dbReference type="SUPFAM" id="SSF54117">
    <property type="entry name" value="Interleukin 8-like chemokines"/>
    <property type="match status" value="1"/>
</dbReference>
<reference key="1">
    <citation type="journal article" date="2000" name="Am. J. Pathol.">
        <title>In vivo expression of the novel CXC chemokine BRAK in normal and cancerous human tissue.</title>
        <authorList>
            <person name="Frederick M.J."/>
            <person name="Henderson Y."/>
            <person name="Xu X."/>
            <person name="Deavers M.T."/>
            <person name="Sahin A.A."/>
            <person name="Wu H."/>
            <person name="Lewis D.E."/>
            <person name="El-Naggar A.K."/>
            <person name="Clayman G.L."/>
        </authorList>
    </citation>
    <scope>NUCLEOTIDE SEQUENCE [MRNA]</scope>
    <scope>TISSUE SPECIFICITY</scope>
    <scope>INDUCTION</scope>
    <source>
        <tissue>Oral epithelium</tissue>
    </source>
</reference>
<reference key="2">
    <citation type="journal article" date="2000" name="J. Immunol.">
        <title>Molecular cloning and characterization of a novel CXC chemokine macrophage inflammatory protein-2 gamma chemoattractant for human neutrophils and dendritic cells.</title>
        <authorList>
            <person name="Cao X."/>
            <person name="Zhang W."/>
            <person name="Wan T."/>
            <person name="He L."/>
            <person name="Chen T."/>
            <person name="Yuan Z."/>
            <person name="Ma S."/>
            <person name="Yu Y."/>
            <person name="Chen G."/>
        </authorList>
    </citation>
    <scope>NUCLEOTIDE SEQUENCE [MRNA]</scope>
    <scope>PROTEIN SEQUENCE OF 35-44</scope>
    <scope>FUNCTION</scope>
    <scope>TISSUE SPECIFICITY</scope>
</reference>
<reference key="3">
    <citation type="journal article" date="2003" name="Genome Res.">
        <title>The secreted protein discovery initiative (SPDI), a large-scale effort to identify novel human secreted and transmembrane proteins: a bioinformatics assessment.</title>
        <authorList>
            <person name="Clark H.F."/>
            <person name="Gurney A.L."/>
            <person name="Abaya E."/>
            <person name="Baker K."/>
            <person name="Baldwin D.T."/>
            <person name="Brush J."/>
            <person name="Chen J."/>
            <person name="Chow B."/>
            <person name="Chui C."/>
            <person name="Crowley C."/>
            <person name="Currell B."/>
            <person name="Deuel B."/>
            <person name="Dowd P."/>
            <person name="Eaton D."/>
            <person name="Foster J.S."/>
            <person name="Grimaldi C."/>
            <person name="Gu Q."/>
            <person name="Hass P.E."/>
            <person name="Heldens S."/>
            <person name="Huang A."/>
            <person name="Kim H.S."/>
            <person name="Klimowski L."/>
            <person name="Jin Y."/>
            <person name="Johnson S."/>
            <person name="Lee J."/>
            <person name="Lewis L."/>
            <person name="Liao D."/>
            <person name="Mark M.R."/>
            <person name="Robbie E."/>
            <person name="Sanchez C."/>
            <person name="Schoenfeld J."/>
            <person name="Seshagiri S."/>
            <person name="Simmons L."/>
            <person name="Singh J."/>
            <person name="Smith V."/>
            <person name="Stinson J."/>
            <person name="Vagts A."/>
            <person name="Vandlen R.L."/>
            <person name="Watanabe C."/>
            <person name="Wieand D."/>
            <person name="Woods K."/>
            <person name="Xie M.-H."/>
            <person name="Yansura D.G."/>
            <person name="Yi S."/>
            <person name="Yu G."/>
            <person name="Yuan J."/>
            <person name="Zhang M."/>
            <person name="Zhang Z."/>
            <person name="Goddard A.D."/>
            <person name="Wood W.I."/>
            <person name="Godowski P.J."/>
            <person name="Gray A.M."/>
        </authorList>
    </citation>
    <scope>NUCLEOTIDE SEQUENCE [LARGE SCALE MRNA]</scope>
</reference>
<reference key="4">
    <citation type="journal article" date="2005" name="DNA Res.">
        <title>Signal sequence and keyword trap in silico for selection of full-length human cDNAs encoding secretion or membrane proteins from oligo-capped cDNA libraries.</title>
        <authorList>
            <person name="Otsuki T."/>
            <person name="Ota T."/>
            <person name="Nishikawa T."/>
            <person name="Hayashi K."/>
            <person name="Suzuki Y."/>
            <person name="Yamamoto J."/>
            <person name="Wakamatsu A."/>
            <person name="Kimura K."/>
            <person name="Sakamoto K."/>
            <person name="Hatano N."/>
            <person name="Kawai Y."/>
            <person name="Ishii S."/>
            <person name="Saito K."/>
            <person name="Kojima S."/>
            <person name="Sugiyama T."/>
            <person name="Ono T."/>
            <person name="Okano K."/>
            <person name="Yoshikawa Y."/>
            <person name="Aotsuka S."/>
            <person name="Sasaki N."/>
            <person name="Hattori A."/>
            <person name="Okumura K."/>
            <person name="Nagai K."/>
            <person name="Sugano S."/>
            <person name="Isogai T."/>
        </authorList>
    </citation>
    <scope>NUCLEOTIDE SEQUENCE [LARGE SCALE MRNA]</scope>
    <source>
        <tissue>Embryo</tissue>
    </source>
</reference>
<reference key="5">
    <citation type="submission" date="2003-05" db="EMBL/GenBank/DDBJ databases">
        <title>Cloning of human full-length CDSs in BD Creator(TM) system donor vector.</title>
        <authorList>
            <person name="Kalnine N."/>
            <person name="Chen X."/>
            <person name="Rolfs A."/>
            <person name="Halleck A."/>
            <person name="Hines L."/>
            <person name="Eisenstein S."/>
            <person name="Koundinya M."/>
            <person name="Raphael J."/>
            <person name="Moreira D."/>
            <person name="Kelley T."/>
            <person name="LaBaer J."/>
            <person name="Lin Y."/>
            <person name="Phelan M."/>
            <person name="Farmer A."/>
        </authorList>
    </citation>
    <scope>NUCLEOTIDE SEQUENCE [LARGE SCALE MRNA]</scope>
</reference>
<reference key="6">
    <citation type="journal article" date="2004" name="Nature">
        <title>The DNA sequence and comparative analysis of human chromosome 5.</title>
        <authorList>
            <person name="Schmutz J."/>
            <person name="Martin J."/>
            <person name="Terry A."/>
            <person name="Couronne O."/>
            <person name="Grimwood J."/>
            <person name="Lowry S."/>
            <person name="Gordon L.A."/>
            <person name="Scott D."/>
            <person name="Xie G."/>
            <person name="Huang W."/>
            <person name="Hellsten U."/>
            <person name="Tran-Gyamfi M."/>
            <person name="She X."/>
            <person name="Prabhakar S."/>
            <person name="Aerts A."/>
            <person name="Altherr M."/>
            <person name="Bajorek E."/>
            <person name="Black S."/>
            <person name="Branscomb E."/>
            <person name="Caoile C."/>
            <person name="Challacombe J.F."/>
            <person name="Chan Y.M."/>
            <person name="Denys M."/>
            <person name="Detter J.C."/>
            <person name="Escobar J."/>
            <person name="Flowers D."/>
            <person name="Fotopulos D."/>
            <person name="Glavina T."/>
            <person name="Gomez M."/>
            <person name="Gonzales E."/>
            <person name="Goodstein D."/>
            <person name="Grigoriev I."/>
            <person name="Groza M."/>
            <person name="Hammon N."/>
            <person name="Hawkins T."/>
            <person name="Haydu L."/>
            <person name="Israni S."/>
            <person name="Jett J."/>
            <person name="Kadner K."/>
            <person name="Kimball H."/>
            <person name="Kobayashi A."/>
            <person name="Lopez F."/>
            <person name="Lou Y."/>
            <person name="Martinez D."/>
            <person name="Medina C."/>
            <person name="Morgan J."/>
            <person name="Nandkeshwar R."/>
            <person name="Noonan J.P."/>
            <person name="Pitluck S."/>
            <person name="Pollard M."/>
            <person name="Predki P."/>
            <person name="Priest J."/>
            <person name="Ramirez L."/>
            <person name="Retterer J."/>
            <person name="Rodriguez A."/>
            <person name="Rogers S."/>
            <person name="Salamov A."/>
            <person name="Salazar A."/>
            <person name="Thayer N."/>
            <person name="Tice H."/>
            <person name="Tsai M."/>
            <person name="Ustaszewska A."/>
            <person name="Vo N."/>
            <person name="Wheeler J."/>
            <person name="Wu K."/>
            <person name="Yang J."/>
            <person name="Dickson M."/>
            <person name="Cheng J.-F."/>
            <person name="Eichler E.E."/>
            <person name="Olsen A."/>
            <person name="Pennacchio L.A."/>
            <person name="Rokhsar D.S."/>
            <person name="Richardson P."/>
            <person name="Lucas S.M."/>
            <person name="Myers R.M."/>
            <person name="Rubin E.M."/>
        </authorList>
    </citation>
    <scope>NUCLEOTIDE SEQUENCE [LARGE SCALE GENOMIC DNA]</scope>
</reference>
<reference key="7">
    <citation type="journal article" date="2004" name="Genome Res.">
        <title>The status, quality, and expansion of the NIH full-length cDNA project: the Mammalian Gene Collection (MGC).</title>
        <authorList>
            <consortium name="The MGC Project Team"/>
        </authorList>
    </citation>
    <scope>NUCLEOTIDE SEQUENCE [LARGE SCALE MRNA]</scope>
    <source>
        <tissue>Pancreas</tissue>
    </source>
</reference>
<reference key="8">
    <citation type="journal article" date="1999" name="Biochem. Biophys. Res. Commun.">
        <title>Cloning of BRAK, a novel divergent CXC chemokine preferentially expressed in normal versus malignant cells.</title>
        <authorList>
            <person name="Hromas R."/>
            <person name="Broxmeyer H.E."/>
            <person name="Kim C."/>
            <person name="Nakshatri H."/>
            <person name="Christopherson K. II"/>
            <person name="Azam M."/>
            <person name="Hou Y.-H."/>
        </authorList>
    </citation>
    <scope>NUCLEOTIDE SEQUENCE [MRNA] OF 13-111</scope>
    <scope>FUNCTION</scope>
    <scope>TISSUE SPECIFICITY</scope>
</reference>
<reference key="9">
    <citation type="journal article" date="2006" name="J. Mol. Biol.">
        <title>Structural determinants involved in the regulation of CXCL14/BRAK expression by the 26 S proteasome.</title>
        <authorList>
            <person name="Peterson F.C."/>
            <person name="Thorpe J.A."/>
            <person name="Harder A.G."/>
            <person name="Volkman B.F."/>
            <person name="Schwarze S.R."/>
        </authorList>
    </citation>
    <scope>STRUCTURE BY NMR OF 34-111</scope>
    <scope>DOMAIN D-BOX MOTIF</scope>
    <scope>UBIQUITINATION</scope>
    <scope>DISULFIDE BONDS</scope>
</reference>
<comment type="function">
    <text evidence="1 3">Potent chemoattractant for neutrophils, and weaker for dendritic cells. Not chemotactic for T-cells, B-cells, monocytes, natural killer cells or granulocytes. Does not inhibit proliferation of myeloid progenitors in colony formation assays.</text>
</comment>
<comment type="interaction">
    <interactant intactId="EBI-2798068">
        <id>O95715</id>
    </interactant>
    <interactant intactId="EBI-953695">
        <id>O00585</id>
        <label>CCL21</label>
    </interactant>
    <organismsDiffer>false</organismsDiffer>
    <experiments>2</experiments>
</comment>
<comment type="interaction">
    <interactant intactId="EBI-2798068">
        <id>O95715</id>
    </interactant>
    <interactant intactId="EBI-7783416">
        <id>Q9Y258</id>
        <label>CCL26</label>
    </interactant>
    <organismsDiffer>false</organismsDiffer>
    <experiments>2</experiments>
</comment>
<comment type="interaction">
    <interactant intactId="EBI-2798068">
        <id>O95715</id>
    </interactant>
    <interactant intactId="EBI-2848366">
        <id>P13501</id>
        <label>CCL5</label>
    </interactant>
    <organismsDiffer>false</organismsDiffer>
    <experiments>2</experiments>
</comment>
<comment type="interaction">
    <interactant intactId="EBI-2798068">
        <id>O95715</id>
    </interactant>
    <interactant intactId="EBI-2871971">
        <id>O14625</id>
        <label>CXCL11</label>
    </interactant>
    <organismsDiffer>false</organismsDiffer>
    <experiments>2</experiments>
</comment>
<comment type="interaction">
    <interactant intactId="EBI-2798068">
        <id>O95715</id>
    </interactant>
    <interactant intactId="EBI-3913254">
        <id>P48061</id>
        <label>CXCL12</label>
    </interactant>
    <organismsDiffer>false</organismsDiffer>
    <experiments>2</experiments>
</comment>
<comment type="interaction">
    <interactant intactId="EBI-2798068">
        <id>O95715</id>
    </interactant>
    <interactant intactId="EBI-3911467">
        <id>Q07325</id>
        <label>CXCL9</label>
    </interactant>
    <organismsDiffer>false</organismsDiffer>
    <experiments>2</experiments>
</comment>
<comment type="interaction">
    <interactant intactId="EBI-2798068">
        <id>O95715</id>
    </interactant>
    <interactant intactId="EBI-2565740">
        <id>P02776</id>
        <label>PF4</label>
    </interactant>
    <organismsDiffer>false</organismsDiffer>
    <experiments>3</experiments>
</comment>
<comment type="interaction">
    <interactant intactId="EBI-2798068">
        <id>O95715</id>
    </interactant>
    <interactant intactId="EBI-742397">
        <id>Q8IYF3</id>
        <label>TEX11</label>
    </interactant>
    <organismsDiffer>false</organismsDiffer>
    <experiments>3</experiments>
</comment>
<comment type="interaction">
    <interactant intactId="EBI-2798068">
        <id>O95715</id>
    </interactant>
    <interactant intactId="EBI-740098">
        <id>P36406</id>
        <label>TRIM23</label>
    </interactant>
    <organismsDiffer>false</organismsDiffer>
    <experiments>3</experiments>
</comment>
<comment type="subcellular location">
    <subcellularLocation>
        <location>Secreted</location>
    </subcellularLocation>
</comment>
<comment type="tissue specificity">
    <text evidence="1 2 3">Expressed in heart, brain, placenta, lung, liver, skeletal muscle, kidney and pancreas. Highly expressed in normal tissue without inflammatory stimuli and infrequently expressed in cancer cell lines. Weakly expressed in monocyte-derived dendritic cells. Not detected in lung or unstimulated peripheral blood lymphocytes.</text>
</comment>
<comment type="induction">
    <text evidence="2">Up-regulated in peripheral blood lymphocytes in response to bacterial lipopolysaccharides (LPS).</text>
</comment>
<comment type="domain">
    <text evidence="4">The destruction box (D-box) acts as a recognition signal for degradation via the ubiquitin-proteasome pathway.</text>
</comment>
<comment type="PTM">
    <text evidence="4">Ubiquitinated, followed by degradation by the proteasome.</text>
</comment>
<comment type="similarity">
    <text evidence="5">Belongs to the intercrine alpha (chemokine CxC) family.</text>
</comment>
<comment type="caution">
    <text evidence="5">It is uncertain whether Met-1 or Met-13 is the initiator.</text>
</comment>
<comment type="sequence caution" evidence="5">
    <conflict type="erroneous initiation">
        <sequence resource="EMBL-CDS" id="AAD38944"/>
    </conflict>
</comment>
<comment type="online information" name="Wikipedia">
    <link uri="https://en.wikipedia.org/wiki/CXCL14"/>
    <text>CXCL14 entry</text>
</comment>
<evidence type="ECO:0000269" key="1">
    <source>
    </source>
</evidence>
<evidence type="ECO:0000269" key="2">
    <source>
    </source>
</evidence>
<evidence type="ECO:0000269" key="3">
    <source>
    </source>
</evidence>
<evidence type="ECO:0000269" key="4">
    <source>
    </source>
</evidence>
<evidence type="ECO:0000305" key="5"/>
<evidence type="ECO:0007829" key="6">
    <source>
        <dbReference type="PDB" id="2HDL"/>
    </source>
</evidence>
<keyword id="KW-0002">3D-structure</keyword>
<keyword id="KW-0145">Chemotaxis</keyword>
<keyword id="KW-0202">Cytokine</keyword>
<keyword id="KW-0903">Direct protein sequencing</keyword>
<keyword id="KW-1015">Disulfide bond</keyword>
<keyword id="KW-1267">Proteomics identification</keyword>
<keyword id="KW-1185">Reference proteome</keyword>
<keyword id="KW-0964">Secreted</keyword>
<keyword id="KW-0732">Signal</keyword>
<keyword id="KW-0832">Ubl conjugation</keyword>
<proteinExistence type="evidence at protein level"/>